<sequence>MKFAVIVFPGSNCDVDMFHAIKDELGEEVDYVWHDRENLDEYDAILLPGGFSYGDYLRCGAISRFANAMKAVQKAAEQGKPILGVCNGFQILVESGLLPGALMRNENLKFMCRTVQLRVENNETMFTSQYEKNEVINIPIAHGEGNYYCDEATLKQLEENNQIAFRYVENPNGSVSDIAGIVNEKGNVLGMMPHPERAVDELLGGAEGLKVFQSILKQWRETYVVNA</sequence>
<gene>
    <name evidence="1" type="primary">purQ</name>
    <name type="ordered locus">BcerKBAB4_0274</name>
</gene>
<name>PURQ_BACMK</name>
<protein>
    <recommendedName>
        <fullName evidence="1">Phosphoribosylformylglycinamidine synthase subunit PurQ</fullName>
        <shortName evidence="1">FGAM synthase</shortName>
        <ecNumber evidence="1">6.3.5.3</ecNumber>
    </recommendedName>
    <alternativeName>
        <fullName evidence="1">Formylglycinamide ribonucleotide amidotransferase subunit I</fullName>
        <shortName evidence="1">FGAR amidotransferase I</shortName>
        <shortName evidence="1">FGAR-AT I</shortName>
    </alternativeName>
    <alternativeName>
        <fullName evidence="1">Glutaminase PurQ</fullName>
        <ecNumber evidence="1">3.5.1.2</ecNumber>
    </alternativeName>
    <alternativeName>
        <fullName evidence="1">Phosphoribosylformylglycinamidine synthase subunit I</fullName>
    </alternativeName>
</protein>
<organism>
    <name type="scientific">Bacillus mycoides (strain KBAB4)</name>
    <name type="common">Bacillus weihenstephanensis</name>
    <dbReference type="NCBI Taxonomy" id="315730"/>
    <lineage>
        <taxon>Bacteria</taxon>
        <taxon>Bacillati</taxon>
        <taxon>Bacillota</taxon>
        <taxon>Bacilli</taxon>
        <taxon>Bacillales</taxon>
        <taxon>Bacillaceae</taxon>
        <taxon>Bacillus</taxon>
        <taxon>Bacillus cereus group</taxon>
    </lineage>
</organism>
<reference key="1">
    <citation type="journal article" date="2008" name="Chem. Biol. Interact.">
        <title>Extending the Bacillus cereus group genomics to putative food-borne pathogens of different toxicity.</title>
        <authorList>
            <person name="Lapidus A."/>
            <person name="Goltsman E."/>
            <person name="Auger S."/>
            <person name="Galleron N."/>
            <person name="Segurens B."/>
            <person name="Dossat C."/>
            <person name="Land M.L."/>
            <person name="Broussolle V."/>
            <person name="Brillard J."/>
            <person name="Guinebretiere M.-H."/>
            <person name="Sanchis V."/>
            <person name="Nguen-the C."/>
            <person name="Lereclus D."/>
            <person name="Richardson P."/>
            <person name="Wincker P."/>
            <person name="Weissenbach J."/>
            <person name="Ehrlich S.D."/>
            <person name="Sorokin A."/>
        </authorList>
    </citation>
    <scope>NUCLEOTIDE SEQUENCE [LARGE SCALE GENOMIC DNA]</scope>
    <source>
        <strain>KBAB4</strain>
    </source>
</reference>
<accession>A9VRF0</accession>
<keyword id="KW-0067">ATP-binding</keyword>
<keyword id="KW-0963">Cytoplasm</keyword>
<keyword id="KW-0315">Glutamine amidotransferase</keyword>
<keyword id="KW-0378">Hydrolase</keyword>
<keyword id="KW-0436">Ligase</keyword>
<keyword id="KW-0547">Nucleotide-binding</keyword>
<keyword id="KW-0658">Purine biosynthesis</keyword>
<evidence type="ECO:0000255" key="1">
    <source>
        <dbReference type="HAMAP-Rule" id="MF_00421"/>
    </source>
</evidence>
<comment type="function">
    <text evidence="1">Part of the phosphoribosylformylglycinamidine synthase complex involved in the purines biosynthetic pathway. Catalyzes the ATP-dependent conversion of formylglycinamide ribonucleotide (FGAR) and glutamine to yield formylglycinamidine ribonucleotide (FGAM) and glutamate. The FGAM synthase complex is composed of three subunits. PurQ produces an ammonia molecule by converting glutamine to glutamate. PurL transfers the ammonia molecule to FGAR to form FGAM in an ATP-dependent manner. PurS interacts with PurQ and PurL and is thought to assist in the transfer of the ammonia molecule from PurQ to PurL.</text>
</comment>
<comment type="catalytic activity">
    <reaction evidence="1">
        <text>N(2)-formyl-N(1)-(5-phospho-beta-D-ribosyl)glycinamide + L-glutamine + ATP + H2O = 2-formamido-N(1)-(5-O-phospho-beta-D-ribosyl)acetamidine + L-glutamate + ADP + phosphate + H(+)</text>
        <dbReference type="Rhea" id="RHEA:17129"/>
        <dbReference type="ChEBI" id="CHEBI:15377"/>
        <dbReference type="ChEBI" id="CHEBI:15378"/>
        <dbReference type="ChEBI" id="CHEBI:29985"/>
        <dbReference type="ChEBI" id="CHEBI:30616"/>
        <dbReference type="ChEBI" id="CHEBI:43474"/>
        <dbReference type="ChEBI" id="CHEBI:58359"/>
        <dbReference type="ChEBI" id="CHEBI:147286"/>
        <dbReference type="ChEBI" id="CHEBI:147287"/>
        <dbReference type="ChEBI" id="CHEBI:456216"/>
        <dbReference type="EC" id="6.3.5.3"/>
    </reaction>
</comment>
<comment type="catalytic activity">
    <reaction evidence="1">
        <text>L-glutamine + H2O = L-glutamate + NH4(+)</text>
        <dbReference type="Rhea" id="RHEA:15889"/>
        <dbReference type="ChEBI" id="CHEBI:15377"/>
        <dbReference type="ChEBI" id="CHEBI:28938"/>
        <dbReference type="ChEBI" id="CHEBI:29985"/>
        <dbReference type="ChEBI" id="CHEBI:58359"/>
        <dbReference type="EC" id="3.5.1.2"/>
    </reaction>
</comment>
<comment type="pathway">
    <text evidence="1">Purine metabolism; IMP biosynthesis via de novo pathway; 5-amino-1-(5-phospho-D-ribosyl)imidazole from N(2)-formyl-N(1)-(5-phospho-D-ribosyl)glycinamide: step 1/2.</text>
</comment>
<comment type="subunit">
    <text evidence="1">Part of the FGAM synthase complex composed of 1 PurL, 1 PurQ and 2 PurS subunits.</text>
</comment>
<comment type="subcellular location">
    <subcellularLocation>
        <location evidence="1">Cytoplasm</location>
    </subcellularLocation>
</comment>
<feature type="chain" id="PRO_1000194851" description="Phosphoribosylformylglycinamidine synthase subunit PurQ">
    <location>
        <begin position="1"/>
        <end position="227"/>
    </location>
</feature>
<feature type="domain" description="Glutamine amidotransferase type-1" evidence="1">
    <location>
        <begin position="3"/>
        <end position="225"/>
    </location>
</feature>
<feature type="active site" description="Nucleophile" evidence="1">
    <location>
        <position position="86"/>
    </location>
</feature>
<feature type="active site" evidence="1">
    <location>
        <position position="194"/>
    </location>
</feature>
<feature type="active site" evidence="1">
    <location>
        <position position="196"/>
    </location>
</feature>
<dbReference type="EC" id="6.3.5.3" evidence="1"/>
<dbReference type="EC" id="3.5.1.2" evidence="1"/>
<dbReference type="EMBL" id="CP000903">
    <property type="protein sequence ID" value="ABY41540.1"/>
    <property type="molecule type" value="Genomic_DNA"/>
</dbReference>
<dbReference type="RefSeq" id="WP_002140189.1">
    <property type="nucleotide sequence ID" value="NC_010184.1"/>
</dbReference>
<dbReference type="SMR" id="A9VRF0"/>
<dbReference type="GeneID" id="66264612"/>
<dbReference type="KEGG" id="bwe:BcerKBAB4_0274"/>
<dbReference type="eggNOG" id="COG0047">
    <property type="taxonomic scope" value="Bacteria"/>
</dbReference>
<dbReference type="HOGENOM" id="CLU_001031_3_1_9"/>
<dbReference type="UniPathway" id="UPA00074">
    <property type="reaction ID" value="UER00128"/>
</dbReference>
<dbReference type="Proteomes" id="UP000002154">
    <property type="component" value="Chromosome"/>
</dbReference>
<dbReference type="GO" id="GO:0005737">
    <property type="term" value="C:cytoplasm"/>
    <property type="evidence" value="ECO:0007669"/>
    <property type="project" value="UniProtKB-SubCell"/>
</dbReference>
<dbReference type="GO" id="GO:0005524">
    <property type="term" value="F:ATP binding"/>
    <property type="evidence" value="ECO:0007669"/>
    <property type="project" value="UniProtKB-KW"/>
</dbReference>
<dbReference type="GO" id="GO:0004359">
    <property type="term" value="F:glutaminase activity"/>
    <property type="evidence" value="ECO:0007669"/>
    <property type="project" value="UniProtKB-EC"/>
</dbReference>
<dbReference type="GO" id="GO:0004642">
    <property type="term" value="F:phosphoribosylformylglycinamidine synthase activity"/>
    <property type="evidence" value="ECO:0007669"/>
    <property type="project" value="UniProtKB-UniRule"/>
</dbReference>
<dbReference type="GO" id="GO:0006189">
    <property type="term" value="P:'de novo' IMP biosynthetic process"/>
    <property type="evidence" value="ECO:0007669"/>
    <property type="project" value="UniProtKB-UniRule"/>
</dbReference>
<dbReference type="CDD" id="cd01740">
    <property type="entry name" value="GATase1_FGAR_AT"/>
    <property type="match status" value="1"/>
</dbReference>
<dbReference type="FunFam" id="3.40.50.880:FF:000019">
    <property type="entry name" value="Phosphoribosylformylglycinamidine synthase subunit PurQ"/>
    <property type="match status" value="1"/>
</dbReference>
<dbReference type="Gene3D" id="3.40.50.880">
    <property type="match status" value="1"/>
</dbReference>
<dbReference type="HAMAP" id="MF_00421">
    <property type="entry name" value="PurQ"/>
    <property type="match status" value="1"/>
</dbReference>
<dbReference type="InterPro" id="IPR029062">
    <property type="entry name" value="Class_I_gatase-like"/>
</dbReference>
<dbReference type="InterPro" id="IPR010075">
    <property type="entry name" value="PRibForGlyAmidine_synth_PurQ"/>
</dbReference>
<dbReference type="NCBIfam" id="TIGR01737">
    <property type="entry name" value="FGAM_synth_I"/>
    <property type="match status" value="1"/>
</dbReference>
<dbReference type="NCBIfam" id="NF002957">
    <property type="entry name" value="PRK03619.1"/>
    <property type="match status" value="1"/>
</dbReference>
<dbReference type="PANTHER" id="PTHR47552">
    <property type="entry name" value="PHOSPHORIBOSYLFORMYLGLYCINAMIDINE SYNTHASE SUBUNIT PURQ"/>
    <property type="match status" value="1"/>
</dbReference>
<dbReference type="PANTHER" id="PTHR47552:SF1">
    <property type="entry name" value="PHOSPHORIBOSYLFORMYLGLYCINAMIDINE SYNTHASE SUBUNIT PURQ"/>
    <property type="match status" value="1"/>
</dbReference>
<dbReference type="Pfam" id="PF13507">
    <property type="entry name" value="GATase_5"/>
    <property type="match status" value="1"/>
</dbReference>
<dbReference type="PIRSF" id="PIRSF001586">
    <property type="entry name" value="FGAM_synth_I"/>
    <property type="match status" value="1"/>
</dbReference>
<dbReference type="SMART" id="SM01211">
    <property type="entry name" value="GATase_5"/>
    <property type="match status" value="1"/>
</dbReference>
<dbReference type="SUPFAM" id="SSF52317">
    <property type="entry name" value="Class I glutamine amidotransferase-like"/>
    <property type="match status" value="1"/>
</dbReference>
<dbReference type="PROSITE" id="PS51273">
    <property type="entry name" value="GATASE_TYPE_1"/>
    <property type="match status" value="1"/>
</dbReference>
<proteinExistence type="inferred from homology"/>